<protein>
    <recommendedName>
        <fullName>Phospholipid scramblase 1</fullName>
        <shortName>PL scramblase 1</shortName>
    </recommendedName>
    <alternativeName>
        <fullName>Ca(2+)-dependent phospholipid scramblase 1</fullName>
    </alternativeName>
    <alternativeName>
        <fullName>Erythrocyte phospholipid scramblase</fullName>
    </alternativeName>
    <alternativeName>
        <fullName evidence="36">Mg(2+)-dependent nuclease</fullName>
        <ecNumber evidence="23">3.1.-.-</ecNumber>
    </alternativeName>
    <alternativeName>
        <fullName>MmTRA1b</fullName>
    </alternativeName>
</protein>
<dbReference type="EC" id="3.1.-.-" evidence="23"/>
<dbReference type="EMBL" id="AF098642">
    <property type="protein sequence ID" value="AAC99413.1"/>
    <property type="molecule type" value="mRNA"/>
</dbReference>
<dbReference type="EMBL" id="AB006746">
    <property type="protein sequence ID" value="BAA32568.1"/>
    <property type="molecule type" value="mRNA"/>
</dbReference>
<dbReference type="EMBL" id="AF224492">
    <property type="protein sequence ID" value="AAF80593.1"/>
    <property type="molecule type" value="Genomic_DNA"/>
</dbReference>
<dbReference type="EMBL" id="AK300181">
    <property type="protein sequence ID" value="BAG61960.1"/>
    <property type="molecule type" value="mRNA"/>
</dbReference>
<dbReference type="EMBL" id="AC069528">
    <property type="status" value="NOT_ANNOTATED_CDS"/>
    <property type="molecule type" value="Genomic_DNA"/>
</dbReference>
<dbReference type="EMBL" id="AC116544">
    <property type="status" value="NOT_ANNOTATED_CDS"/>
    <property type="molecule type" value="Genomic_DNA"/>
</dbReference>
<dbReference type="EMBL" id="AK313377">
    <property type="protein sequence ID" value="BAG36175.1"/>
    <property type="molecule type" value="mRNA"/>
</dbReference>
<dbReference type="EMBL" id="CH471052">
    <property type="protein sequence ID" value="EAW78926.1"/>
    <property type="molecule type" value="Genomic_DNA"/>
</dbReference>
<dbReference type="EMBL" id="BC021100">
    <property type="protein sequence ID" value="AAH21100.1"/>
    <property type="molecule type" value="mRNA"/>
</dbReference>
<dbReference type="EMBL" id="BC032718">
    <property type="protein sequence ID" value="AAH32718.1"/>
    <property type="molecule type" value="mRNA"/>
</dbReference>
<dbReference type="CCDS" id="CCDS3135.1">
    <molecule id="O15162-1"/>
</dbReference>
<dbReference type="CCDS" id="CCDS87152.1">
    <molecule id="O15162-2"/>
</dbReference>
<dbReference type="PIR" id="JE0284">
    <property type="entry name" value="JE0284"/>
</dbReference>
<dbReference type="RefSeq" id="NP_001350803.1">
    <molecule id="O15162-2"/>
    <property type="nucleotide sequence ID" value="NM_001363874.1"/>
</dbReference>
<dbReference type="RefSeq" id="NP_001392963.1">
    <molecule id="O15162-1"/>
    <property type="nucleotide sequence ID" value="NM_001406034.1"/>
</dbReference>
<dbReference type="RefSeq" id="NP_001392964.1">
    <molecule id="O15162-1"/>
    <property type="nucleotide sequence ID" value="NM_001406035.1"/>
</dbReference>
<dbReference type="RefSeq" id="NP_001392967.1">
    <molecule id="O15162-2"/>
    <property type="nucleotide sequence ID" value="NM_001406038.1"/>
</dbReference>
<dbReference type="RefSeq" id="NP_001392968.1">
    <molecule id="O15162-2"/>
    <property type="nucleotide sequence ID" value="NM_001406039.1"/>
</dbReference>
<dbReference type="RefSeq" id="NP_001392969.1">
    <molecule id="O15162-2"/>
    <property type="nucleotide sequence ID" value="NM_001406040.1"/>
</dbReference>
<dbReference type="RefSeq" id="NP_001392970.1">
    <molecule id="O15162-2"/>
    <property type="nucleotide sequence ID" value="NM_001406041.1"/>
</dbReference>
<dbReference type="RefSeq" id="NP_066928.1">
    <molecule id="O15162-1"/>
    <property type="nucleotide sequence ID" value="NM_021105.3"/>
</dbReference>
<dbReference type="RefSeq" id="XP_005247595.1">
    <property type="nucleotide sequence ID" value="XM_005247538.3"/>
</dbReference>
<dbReference type="RefSeq" id="XP_011511206.1">
    <property type="nucleotide sequence ID" value="XM_011512904.1"/>
</dbReference>
<dbReference type="RefSeq" id="XP_011511208.1">
    <property type="nucleotide sequence ID" value="XM_011512906.2"/>
</dbReference>
<dbReference type="RefSeq" id="XP_011511209.1">
    <property type="nucleotide sequence ID" value="XM_011512907.2"/>
</dbReference>
<dbReference type="RefSeq" id="XP_016862118.1">
    <property type="nucleotide sequence ID" value="XM_017006629.1"/>
</dbReference>
<dbReference type="RefSeq" id="XP_047304285.1">
    <molecule id="O15162-1"/>
    <property type="nucleotide sequence ID" value="XM_047448329.1"/>
</dbReference>
<dbReference type="RefSeq" id="XP_054202859.1">
    <molecule id="O15162-1"/>
    <property type="nucleotide sequence ID" value="XM_054346884.1"/>
</dbReference>
<dbReference type="PDB" id="1Y2A">
    <property type="method" value="X-ray"/>
    <property type="resolution" value="2.20 A"/>
    <property type="chains" value="P=257-266"/>
</dbReference>
<dbReference type="PDBsum" id="1Y2A"/>
<dbReference type="SMR" id="O15162"/>
<dbReference type="BioGRID" id="111373">
    <property type="interactions" value="177"/>
</dbReference>
<dbReference type="FunCoup" id="O15162">
    <property type="interactions" value="1608"/>
</dbReference>
<dbReference type="IntAct" id="O15162">
    <property type="interactions" value="186"/>
</dbReference>
<dbReference type="MINT" id="O15162"/>
<dbReference type="STRING" id="9606.ENSP00000345494"/>
<dbReference type="SwissLipids" id="SLP:000000332"/>
<dbReference type="TCDB" id="9.A.36.1.1">
    <property type="family name" value="the ca(2+)-dependent phospholipid scramblase (scramblase) family"/>
</dbReference>
<dbReference type="GlyGen" id="O15162">
    <property type="glycosylation" value="1 site, 1 O-linked glycan (1 site)"/>
</dbReference>
<dbReference type="iPTMnet" id="O15162"/>
<dbReference type="PhosphoSitePlus" id="O15162"/>
<dbReference type="SwissPalm" id="O15162"/>
<dbReference type="BioMuta" id="PLSCR1"/>
<dbReference type="jPOST" id="O15162"/>
<dbReference type="MassIVE" id="O15162"/>
<dbReference type="PaxDb" id="9606-ENSP00000345494"/>
<dbReference type="PeptideAtlas" id="O15162"/>
<dbReference type="ProteomicsDB" id="48483">
    <molecule id="O15162-1"/>
</dbReference>
<dbReference type="ProteomicsDB" id="5105"/>
<dbReference type="Pumba" id="O15162"/>
<dbReference type="Antibodypedia" id="18144">
    <property type="antibodies" value="269 antibodies from 33 providers"/>
</dbReference>
<dbReference type="DNASU" id="5359"/>
<dbReference type="Ensembl" id="ENST00000342435.9">
    <molecule id="O15162-1"/>
    <property type="protein sequence ID" value="ENSP00000345494.4"/>
    <property type="gene ID" value="ENSG00000188313.13"/>
</dbReference>
<dbReference type="Ensembl" id="ENST00000448787.6">
    <molecule id="O15162-2"/>
    <property type="protein sequence ID" value="ENSP00000411675.2"/>
    <property type="gene ID" value="ENSG00000188313.13"/>
</dbReference>
<dbReference type="GeneID" id="5359"/>
<dbReference type="KEGG" id="hsa:5359"/>
<dbReference type="MANE-Select" id="ENST00000342435.9">
    <property type="protein sequence ID" value="ENSP00000345494.4"/>
    <property type="RefSeq nucleotide sequence ID" value="NM_021105.3"/>
    <property type="RefSeq protein sequence ID" value="NP_066928.1"/>
</dbReference>
<dbReference type="UCSC" id="uc003evx.5">
    <molecule id="O15162-1"/>
    <property type="organism name" value="human"/>
</dbReference>
<dbReference type="AGR" id="HGNC:9092"/>
<dbReference type="CTD" id="5359"/>
<dbReference type="DisGeNET" id="5359"/>
<dbReference type="GeneCards" id="PLSCR1"/>
<dbReference type="HGNC" id="HGNC:9092">
    <property type="gene designation" value="PLSCR1"/>
</dbReference>
<dbReference type="HPA" id="ENSG00000188313">
    <property type="expression patterns" value="Low tissue specificity"/>
</dbReference>
<dbReference type="MIM" id="604170">
    <property type="type" value="gene"/>
</dbReference>
<dbReference type="neXtProt" id="NX_O15162"/>
<dbReference type="OpenTargets" id="ENSG00000188313"/>
<dbReference type="PharmGKB" id="PA33419"/>
<dbReference type="VEuPathDB" id="HostDB:ENSG00000188313"/>
<dbReference type="eggNOG" id="KOG0621">
    <property type="taxonomic scope" value="Eukaryota"/>
</dbReference>
<dbReference type="GeneTree" id="ENSGT00940000154435"/>
<dbReference type="InParanoid" id="O15162"/>
<dbReference type="OMA" id="QNWHLWR"/>
<dbReference type="OrthoDB" id="191150at2759"/>
<dbReference type="PAN-GO" id="O15162">
    <property type="GO annotations" value="3 GO annotations based on evolutionary models"/>
</dbReference>
<dbReference type="PhylomeDB" id="O15162"/>
<dbReference type="TreeFam" id="TF314939"/>
<dbReference type="BRENDA" id="7.6.2.1">
    <property type="organism ID" value="2681"/>
</dbReference>
<dbReference type="PathwayCommons" id="O15162"/>
<dbReference type="SignaLink" id="O15162"/>
<dbReference type="SIGNOR" id="O15162"/>
<dbReference type="BioGRID-ORCS" id="5359">
    <property type="hits" value="20 hits in 1170 CRISPR screens"/>
</dbReference>
<dbReference type="ChiTaRS" id="PLSCR1">
    <property type="organism name" value="human"/>
</dbReference>
<dbReference type="EvolutionaryTrace" id="O15162"/>
<dbReference type="GeneWiki" id="PLSCR1"/>
<dbReference type="GenomeRNAi" id="5359"/>
<dbReference type="Pharos" id="O15162">
    <property type="development level" value="Tbio"/>
</dbReference>
<dbReference type="PRO" id="PR:O15162"/>
<dbReference type="Proteomes" id="UP000005640">
    <property type="component" value="Chromosome 3"/>
</dbReference>
<dbReference type="RNAct" id="O15162">
    <property type="molecule type" value="protein"/>
</dbReference>
<dbReference type="Bgee" id="ENSG00000188313">
    <property type="expression patterns" value="Expressed in palpebral conjunctiva and 204 other cell types or tissues"/>
</dbReference>
<dbReference type="ExpressionAtlas" id="O15162">
    <property type="expression patterns" value="baseline and differential"/>
</dbReference>
<dbReference type="GO" id="GO:0062023">
    <property type="term" value="C:collagen-containing extracellular matrix"/>
    <property type="evidence" value="ECO:0000314"/>
    <property type="project" value="UniProtKB"/>
</dbReference>
<dbReference type="GO" id="GO:0005737">
    <property type="term" value="C:cytoplasm"/>
    <property type="evidence" value="ECO:0000314"/>
    <property type="project" value="UniProtKB"/>
</dbReference>
<dbReference type="GO" id="GO:0005829">
    <property type="term" value="C:cytosol"/>
    <property type="evidence" value="ECO:0000314"/>
    <property type="project" value="UniProtKB"/>
</dbReference>
<dbReference type="GO" id="GO:0070062">
    <property type="term" value="C:extracellular exosome"/>
    <property type="evidence" value="ECO:0007005"/>
    <property type="project" value="UniProtKB"/>
</dbReference>
<dbReference type="GO" id="GO:0005794">
    <property type="term" value="C:Golgi apparatus"/>
    <property type="evidence" value="ECO:0000314"/>
    <property type="project" value="HPA"/>
</dbReference>
<dbReference type="GO" id="GO:0016020">
    <property type="term" value="C:membrane"/>
    <property type="evidence" value="ECO:0007005"/>
    <property type="project" value="UniProtKB"/>
</dbReference>
<dbReference type="GO" id="GO:0045121">
    <property type="term" value="C:membrane raft"/>
    <property type="evidence" value="ECO:0000314"/>
    <property type="project" value="UniProtKB"/>
</dbReference>
<dbReference type="GO" id="GO:0005730">
    <property type="term" value="C:nucleolus"/>
    <property type="evidence" value="ECO:0000314"/>
    <property type="project" value="UniProtKB"/>
</dbReference>
<dbReference type="GO" id="GO:0005654">
    <property type="term" value="C:nucleoplasm"/>
    <property type="evidence" value="ECO:0000314"/>
    <property type="project" value="HPA"/>
</dbReference>
<dbReference type="GO" id="GO:0005634">
    <property type="term" value="C:nucleus"/>
    <property type="evidence" value="ECO:0000314"/>
    <property type="project" value="UniProtKB"/>
</dbReference>
<dbReference type="GO" id="GO:0048471">
    <property type="term" value="C:perinuclear region of cytoplasm"/>
    <property type="evidence" value="ECO:0000314"/>
    <property type="project" value="UniProtKB"/>
</dbReference>
<dbReference type="GO" id="GO:0005886">
    <property type="term" value="C:plasma membrane"/>
    <property type="evidence" value="ECO:0000314"/>
    <property type="project" value="HPA"/>
</dbReference>
<dbReference type="GO" id="GO:0005509">
    <property type="term" value="F:calcium ion binding"/>
    <property type="evidence" value="ECO:0000314"/>
    <property type="project" value="UniProtKB"/>
</dbReference>
<dbReference type="GO" id="GO:0042609">
    <property type="term" value="F:CD4 receptor binding"/>
    <property type="evidence" value="ECO:0000353"/>
    <property type="project" value="UniProtKB"/>
</dbReference>
<dbReference type="GO" id="GO:0003677">
    <property type="term" value="F:DNA binding"/>
    <property type="evidence" value="ECO:0007669"/>
    <property type="project" value="UniProtKB-KW"/>
</dbReference>
<dbReference type="GO" id="GO:0001228">
    <property type="term" value="F:DNA-binding transcription activator activity, RNA polymerase II-specific"/>
    <property type="evidence" value="ECO:0000314"/>
    <property type="project" value="UniProtKB"/>
</dbReference>
<dbReference type="GO" id="GO:0019899">
    <property type="term" value="F:enzyme binding"/>
    <property type="evidence" value="ECO:0000353"/>
    <property type="project" value="UniProtKB"/>
</dbReference>
<dbReference type="GO" id="GO:0005154">
    <property type="term" value="F:epidermal growth factor receptor binding"/>
    <property type="evidence" value="ECO:0000353"/>
    <property type="project" value="UniProtKB"/>
</dbReference>
<dbReference type="GO" id="GO:0032791">
    <property type="term" value="F:lead ion binding"/>
    <property type="evidence" value="ECO:0000314"/>
    <property type="project" value="UniProtKB"/>
</dbReference>
<dbReference type="GO" id="GO:0000287">
    <property type="term" value="F:magnesium ion binding"/>
    <property type="evidence" value="ECO:0000314"/>
    <property type="project" value="UniProtKB"/>
</dbReference>
<dbReference type="GO" id="GO:0045340">
    <property type="term" value="F:mercury ion binding"/>
    <property type="evidence" value="ECO:0000314"/>
    <property type="project" value="UniProtKB"/>
</dbReference>
<dbReference type="GO" id="GO:0004518">
    <property type="term" value="F:nuclease activity"/>
    <property type="evidence" value="ECO:0000315"/>
    <property type="project" value="UniProtKB"/>
</dbReference>
<dbReference type="GO" id="GO:0017128">
    <property type="term" value="F:phospholipid scramblase activity"/>
    <property type="evidence" value="ECO:0000314"/>
    <property type="project" value="UniProtKB"/>
</dbReference>
<dbReference type="GO" id="GO:0017124">
    <property type="term" value="F:SH3 domain binding"/>
    <property type="evidence" value="ECO:0000314"/>
    <property type="project" value="UniProtKB"/>
</dbReference>
<dbReference type="GO" id="GO:0001618">
    <property type="term" value="F:virus receptor activity"/>
    <property type="evidence" value="ECO:0000315"/>
    <property type="project" value="UniProtKB"/>
</dbReference>
<dbReference type="GO" id="GO:0008270">
    <property type="term" value="F:zinc ion binding"/>
    <property type="evidence" value="ECO:0000314"/>
    <property type="project" value="UniProtKB"/>
</dbReference>
<dbReference type="GO" id="GO:0006953">
    <property type="term" value="P:acute-phase response"/>
    <property type="evidence" value="ECO:0000250"/>
    <property type="project" value="UniProtKB"/>
</dbReference>
<dbReference type="GO" id="GO:0006915">
    <property type="term" value="P:apoptotic process"/>
    <property type="evidence" value="ECO:0000314"/>
    <property type="project" value="UniProtKB"/>
</dbReference>
<dbReference type="GO" id="GO:0051607">
    <property type="term" value="P:defense response to virus"/>
    <property type="evidence" value="ECO:0000315"/>
    <property type="project" value="UniProtKB"/>
</dbReference>
<dbReference type="GO" id="GO:0050765">
    <property type="term" value="P:negative regulation of phagocytosis"/>
    <property type="evidence" value="ECO:0000315"/>
    <property type="project" value="UniProtKB"/>
</dbReference>
<dbReference type="GO" id="GO:0045071">
    <property type="term" value="P:negative regulation of viral genome replication"/>
    <property type="evidence" value="ECO:0000315"/>
    <property type="project" value="UniProtKB"/>
</dbReference>
<dbReference type="GO" id="GO:0006659">
    <property type="term" value="P:phosphatidylserine biosynthetic process"/>
    <property type="evidence" value="ECO:0000250"/>
    <property type="project" value="UniProtKB"/>
</dbReference>
<dbReference type="GO" id="GO:0070782">
    <property type="term" value="P:phosphatidylserine exposure on apoptotic cell surface"/>
    <property type="evidence" value="ECO:0000315"/>
    <property type="project" value="UniProtKB"/>
</dbReference>
<dbReference type="GO" id="GO:0017121">
    <property type="term" value="P:plasma membrane phospholipid scrambling"/>
    <property type="evidence" value="ECO:0000314"/>
    <property type="project" value="UniProtKB"/>
</dbReference>
<dbReference type="GO" id="GO:0030168">
    <property type="term" value="P:platelet activation"/>
    <property type="evidence" value="ECO:0000303"/>
    <property type="project" value="UniProtKB"/>
</dbReference>
<dbReference type="GO" id="GO:1905820">
    <property type="term" value="P:positive regulation of chromosome separation"/>
    <property type="evidence" value="ECO:0000314"/>
    <property type="project" value="UniProtKB"/>
</dbReference>
<dbReference type="GO" id="GO:2000373">
    <property type="term" value="P:positive regulation of DNA topoisomerase (ATP-hydrolyzing) activity"/>
    <property type="evidence" value="ECO:0000314"/>
    <property type="project" value="UniProtKB"/>
</dbReference>
<dbReference type="GO" id="GO:0010628">
    <property type="term" value="P:positive regulation of gene expression"/>
    <property type="evidence" value="ECO:0000315"/>
    <property type="project" value="UniProtKB"/>
</dbReference>
<dbReference type="GO" id="GO:0045089">
    <property type="term" value="P:positive regulation of innate immune response"/>
    <property type="evidence" value="ECO:0000315"/>
    <property type="project" value="UniProtKB"/>
</dbReference>
<dbReference type="GO" id="GO:0045944">
    <property type="term" value="P:positive regulation of transcription by RNA polymerase II"/>
    <property type="evidence" value="ECO:0000314"/>
    <property type="project" value="UniProtKB"/>
</dbReference>
<dbReference type="GO" id="GO:0060368">
    <property type="term" value="P:regulation of Fc receptor mediated stimulatory signaling pathway"/>
    <property type="evidence" value="ECO:0000250"/>
    <property type="project" value="UniProtKB"/>
</dbReference>
<dbReference type="GO" id="GO:0033003">
    <property type="term" value="P:regulation of mast cell activation"/>
    <property type="evidence" value="ECO:0000250"/>
    <property type="project" value="UniProtKB"/>
</dbReference>
<dbReference type="GO" id="GO:0035456">
    <property type="term" value="P:response to interferon-beta"/>
    <property type="evidence" value="ECO:0000315"/>
    <property type="project" value="UniProtKB"/>
</dbReference>
<dbReference type="GO" id="GO:0010288">
    <property type="term" value="P:response to lead ion"/>
    <property type="evidence" value="ECO:0000314"/>
    <property type="project" value="UniProtKB"/>
</dbReference>
<dbReference type="IDEAL" id="IID00006"/>
<dbReference type="InterPro" id="IPR005552">
    <property type="entry name" value="Scramblase"/>
</dbReference>
<dbReference type="PANTHER" id="PTHR23248:SF38">
    <property type="entry name" value="PHOSPHOLIPID SCRAMBLASE 1"/>
    <property type="match status" value="1"/>
</dbReference>
<dbReference type="PANTHER" id="PTHR23248">
    <property type="entry name" value="PHOSPHOLIPID SCRAMBLASE-RELATED"/>
    <property type="match status" value="1"/>
</dbReference>
<dbReference type="Pfam" id="PF03803">
    <property type="entry name" value="Scramblase"/>
    <property type="match status" value="1"/>
</dbReference>
<name>PLS1_HUMAN</name>
<evidence type="ECO:0000250" key="1">
    <source>
        <dbReference type="UniProtKB" id="Q9JJ00"/>
    </source>
</evidence>
<evidence type="ECO:0000255" key="2"/>
<evidence type="ECO:0000256" key="3">
    <source>
        <dbReference type="SAM" id="MobiDB-lite"/>
    </source>
</evidence>
<evidence type="ECO:0000269" key="4">
    <source>
    </source>
</evidence>
<evidence type="ECO:0000269" key="5">
    <source>
    </source>
</evidence>
<evidence type="ECO:0000269" key="6">
    <source>
    </source>
</evidence>
<evidence type="ECO:0000269" key="7">
    <source>
    </source>
</evidence>
<evidence type="ECO:0000269" key="8">
    <source>
    </source>
</evidence>
<evidence type="ECO:0000269" key="9">
    <source>
    </source>
</evidence>
<evidence type="ECO:0000269" key="10">
    <source>
    </source>
</evidence>
<evidence type="ECO:0000269" key="11">
    <source>
    </source>
</evidence>
<evidence type="ECO:0000269" key="12">
    <source>
    </source>
</evidence>
<evidence type="ECO:0000269" key="13">
    <source>
    </source>
</evidence>
<evidence type="ECO:0000269" key="14">
    <source>
    </source>
</evidence>
<evidence type="ECO:0000269" key="15">
    <source>
    </source>
</evidence>
<evidence type="ECO:0000269" key="16">
    <source>
    </source>
</evidence>
<evidence type="ECO:0000269" key="17">
    <source>
    </source>
</evidence>
<evidence type="ECO:0000269" key="18">
    <source>
    </source>
</evidence>
<evidence type="ECO:0000269" key="19">
    <source>
    </source>
</evidence>
<evidence type="ECO:0000269" key="20">
    <source>
    </source>
</evidence>
<evidence type="ECO:0000269" key="21">
    <source>
    </source>
</evidence>
<evidence type="ECO:0000269" key="22">
    <source>
    </source>
</evidence>
<evidence type="ECO:0000269" key="23">
    <source>
    </source>
</evidence>
<evidence type="ECO:0000269" key="24">
    <source>
    </source>
</evidence>
<evidence type="ECO:0000269" key="25">
    <source>
    </source>
</evidence>
<evidence type="ECO:0000269" key="26">
    <source>
    </source>
</evidence>
<evidence type="ECO:0000269" key="27">
    <source>
    </source>
</evidence>
<evidence type="ECO:0000269" key="28">
    <source>
    </source>
</evidence>
<evidence type="ECO:0000269" key="29">
    <source>
    </source>
</evidence>
<evidence type="ECO:0000269" key="30">
    <source>
    </source>
</evidence>
<evidence type="ECO:0000269" key="31">
    <source>
    </source>
</evidence>
<evidence type="ECO:0000269" key="32">
    <source>
    </source>
</evidence>
<evidence type="ECO:0000269" key="33">
    <source>
    </source>
</evidence>
<evidence type="ECO:0000269" key="34">
    <source>
    </source>
</evidence>
<evidence type="ECO:0000303" key="35">
    <source>
    </source>
</evidence>
<evidence type="ECO:0000303" key="36">
    <source>
    </source>
</evidence>
<evidence type="ECO:0000305" key="37"/>
<evidence type="ECO:0000305" key="38">
    <source>
    </source>
</evidence>
<evidence type="ECO:0000305" key="39">
    <source>
    </source>
</evidence>
<evidence type="ECO:0000305" key="40">
    <source>
    </source>
</evidence>
<evidence type="ECO:0000305" key="41">
    <source>
    </source>
</evidence>
<evidence type="ECO:0000305" key="42">
    <source>
    </source>
</evidence>
<gene>
    <name type="primary">PLSCR1</name>
</gene>
<accession>O15162</accession>
<accession>B2R8H8</accession>
<accession>B4DTE8</accession>
<keyword id="KW-0002">3D-structure</keyword>
<keyword id="KW-0025">Alternative splicing</keyword>
<keyword id="KW-0051">Antiviral defense</keyword>
<keyword id="KW-0106">Calcium</keyword>
<keyword id="KW-1003">Cell membrane</keyword>
<keyword id="KW-0963">Cytoplasm</keyword>
<keyword id="KW-0903">Direct protein sequencing</keyword>
<keyword id="KW-0238">DNA-binding</keyword>
<keyword id="KW-1183">Host cell receptor for virus entry</keyword>
<keyword id="KW-0945">Host-virus interaction</keyword>
<keyword id="KW-0378">Hydrolase</keyword>
<keyword id="KW-0445">Lipid transport</keyword>
<keyword id="KW-0449">Lipoprotein</keyword>
<keyword id="KW-0460">Magnesium</keyword>
<keyword id="KW-0472">Membrane</keyword>
<keyword id="KW-0540">Nuclease</keyword>
<keyword id="KW-0539">Nucleus</keyword>
<keyword id="KW-0564">Palmitate</keyword>
<keyword id="KW-0597">Phosphoprotein</keyword>
<keyword id="KW-1267">Proteomics identification</keyword>
<keyword id="KW-0675">Receptor</keyword>
<keyword id="KW-1185">Reference proteome</keyword>
<keyword id="KW-0677">Repeat</keyword>
<keyword id="KW-0729">SH3-binding</keyword>
<keyword id="KW-0812">Transmembrane</keyword>
<keyword id="KW-1133">Transmembrane helix</keyword>
<keyword id="KW-0813">Transport</keyword>
<feature type="chain" id="PRO_0000100784" description="Phospholipid scramblase 1">
    <location>
        <begin position="1"/>
        <end position="318"/>
    </location>
</feature>
<feature type="topological domain" description="Cytoplasmic" evidence="22">
    <location>
        <begin position="1"/>
        <end position="288"/>
    </location>
</feature>
<feature type="transmembrane region" description="Helical" evidence="17">
    <location>
        <begin position="289"/>
        <end position="305"/>
    </location>
</feature>
<feature type="topological domain" description="Extracellular" evidence="22">
    <location>
        <begin position="306"/>
        <end position="318"/>
    </location>
</feature>
<feature type="region of interest" description="Proline-rich domain (PRD)" evidence="20">
    <location>
        <begin position="1"/>
        <end position="84"/>
    </location>
</feature>
<feature type="region of interest" description="Disordered" evidence="3">
    <location>
        <begin position="1"/>
        <end position="64"/>
    </location>
</feature>
<feature type="region of interest" description="Interaction with hepatitis C virus E2 glycoprotein" evidence="13">
    <location>
        <begin position="99"/>
        <end position="290"/>
    </location>
</feature>
<feature type="short sequence motif" description="SH3-binding 1" evidence="2">
    <location>
        <begin position="18"/>
        <end position="26"/>
    </location>
</feature>
<feature type="short sequence motif" description="PPXY motif 1" evidence="2">
    <location>
        <begin position="22"/>
        <end position="25"/>
    </location>
</feature>
<feature type="short sequence motif" description="PPXY motif 2" evidence="2">
    <location>
        <begin position="33"/>
        <end position="36"/>
    </location>
</feature>
<feature type="short sequence motif" description="SH3-binding 2" evidence="2">
    <location>
        <begin position="42"/>
        <end position="50"/>
    </location>
</feature>
<feature type="short sequence motif" description="SH3-binding 3" evidence="2">
    <location>
        <begin position="84"/>
        <end position="92"/>
    </location>
</feature>
<feature type="short sequence motif" description="Nuclear localization signal" evidence="9">
    <location>
        <begin position="257"/>
        <end position="266"/>
    </location>
</feature>
<feature type="compositionally biased region" description="Polar residues" evidence="3">
    <location>
        <begin position="1"/>
        <end position="14"/>
    </location>
</feature>
<feature type="compositionally biased region" description="Low complexity" evidence="3">
    <location>
        <begin position="31"/>
        <end position="44"/>
    </location>
</feature>
<feature type="modified residue" description="Phosphotyrosine; by ABL" evidence="6">
    <location>
        <position position="69"/>
    </location>
</feature>
<feature type="modified residue" description="Phosphotyrosine; by ABL" evidence="6">
    <location>
        <position position="74"/>
    </location>
</feature>
<feature type="modified residue" description="Phosphothreonine; by PKC/PRKCD" evidence="4">
    <location>
        <position position="161"/>
    </location>
</feature>
<feature type="lipid moiety-binding region" description="S-palmitoyl cysteine" evidence="38">
    <location>
        <position position="184"/>
    </location>
</feature>
<feature type="lipid moiety-binding region" description="S-palmitoyl cysteine" evidence="38">
    <location>
        <position position="185"/>
    </location>
</feature>
<feature type="lipid moiety-binding region" description="S-palmitoyl cysteine" evidence="38">
    <location>
        <position position="186"/>
    </location>
</feature>
<feature type="lipid moiety-binding region" description="S-palmitoyl cysteine" evidence="38">
    <location>
        <position position="188"/>
    </location>
</feature>
<feature type="lipid moiety-binding region" description="S-palmitoyl cysteine" evidence="38">
    <location>
        <position position="189"/>
    </location>
</feature>
<feature type="splice variant" id="VSP_055237" description="In isoform 2." evidence="35">
    <original>MDKQNSQMNASHPETNLPVGYPP</original>
    <variation>MLLTRKQTCQLGILLSIHRQHSK</variation>
    <location>
        <begin position="1"/>
        <end position="23"/>
    </location>
</feature>
<feature type="splice variant" id="VSP_055238" description="In isoform 2." evidence="35">
    <location>
        <begin position="24"/>
        <end position="104"/>
    </location>
</feature>
<feature type="sequence variant" id="VAR_034388" description="Significantly impaired anti-SARS-CoV-2 activity; dbSNP:rs343320." evidence="30">
    <original>H</original>
    <variation>Y</variation>
    <location>
        <position position="262"/>
    </location>
</feature>
<feature type="mutagenesis site" description="60% reduction in nuclease activity; when associated with A-53; A-111; A-211 and A-262." evidence="23">
    <original>H</original>
    <variation>A</variation>
    <location>
        <position position="12"/>
    </location>
</feature>
<feature type="mutagenesis site" description="60% reduction in nuclease activity; when associated with A-12; A-111; A-211 and A-262." evidence="23">
    <original>H</original>
    <variation>A</variation>
    <location>
        <position position="53"/>
    </location>
</feature>
<feature type="mutagenesis site" description="Decrease in phosphorylation." evidence="6">
    <original>Y</original>
    <variation>F</variation>
    <location>
        <position position="69"/>
    </location>
</feature>
<feature type="mutagenesis site" description="Decrease in phosphorylation." evidence="6">
    <original>Y</original>
    <variation>F</variation>
    <location>
        <position position="74"/>
    </location>
</feature>
<feature type="mutagenesis site" description="60% reduction in nuclease activity; when associated with A-12; A-53; A-211 and A-262." evidence="23">
    <original>H</original>
    <variation>A</variation>
    <location>
        <position position="111"/>
    </location>
</feature>
<feature type="mutagenesis site" description="No induction by PKC/PRKCD." evidence="4">
    <original>T</original>
    <variation>A</variation>
    <location>
        <position position="161"/>
    </location>
</feature>
<feature type="mutagenesis site" description="No palmitoylation; constitutively localizes in the nucleus. Loss of protection against SARS-CoV-2-containing vesicles." evidence="7 9 30">
    <original>CCCPCC</original>
    <variation>AAAPAA</variation>
    <location>
        <begin position="184"/>
        <end position="189"/>
    </location>
</feature>
<feature type="mutagenesis site" description="60% reduction in nuclease activity; when associated with A-12; A-53; A-111 and A-262." evidence="23">
    <original>H</original>
    <variation>A</variation>
    <location>
        <position position="211"/>
    </location>
</feature>
<feature type="mutagenesis site" description="60% reduction in nuclease activity; when associated with A-12; A-53; A-111 and A-211." evidence="23">
    <original>H</original>
    <variation>A</variation>
    <location>
        <position position="262"/>
    </location>
</feature>
<feature type="mutagenesis site" description="Reduces the Ca(2+)-dependent phospholipid scrambling." evidence="33">
    <original>D</original>
    <variation>A</variation>
    <location>
        <position position="273"/>
    </location>
</feature>
<feature type="mutagenesis site" description="Complete inactivation of the Ca(2+)-dependent phospholipid scrambling. No effect on its nuclease activity." evidence="23 33">
    <original>D</original>
    <variation>A</variation>
    <location>
        <position position="275"/>
    </location>
</feature>
<feature type="mutagenesis site" description="Reduces the Ca(2+)-dependent phospholipid scrambling." evidence="33">
    <original>F</original>
    <variation>A</variation>
    <location>
        <position position="277"/>
    </location>
</feature>
<feature type="mutagenesis site" description="Reduces the Ca(2+)-dependent phospholipid scrambling." evidence="33">
    <original>I</original>
    <variation>A</variation>
    <location>
        <position position="279"/>
    </location>
</feature>
<feature type="mutagenesis site" description="Complete inactivation of the Ca(2+)-dependent phospholipid scrambling." evidence="30 33">
    <original>F</original>
    <variation>A</variation>
    <location>
        <position position="281"/>
    </location>
</feature>
<feature type="mutagenesis site" description="Reduces the Ca(2+)-dependent phospholipid scrambling." evidence="33">
    <original>D</original>
    <variation>A</variation>
    <location>
        <position position="284"/>
    </location>
</feature>
<sequence>MDKQNSQMNASHPETNLPVGYPPQYPPTAFQGPPGYSGYPGPQVSYPPPPAGHSGPGPAGFPVPNQPVYNQPVYNQPVGAAGVPWMPAPQPPLNCPPGLEYLSQIDQILIHQQIELLEVLTGFETNNKYEIKNSFGQRVYFAAEDTDCCTRNCCGPSRPFTLRIIDNMGQEVITLERPLRCSSCCCPCCLQEIEIQAPPGVPIGYVIQTWHPCLPKFTIQNEKREDVLKISGPCVVCSCCGDVDFEIKSLDEQCVVGKISKHWTGILREAFTDADNFGIQFPLDLDVKMKAVMIGACFLIDFMFFESTGSQEQKSGVW</sequence>
<reference key="1">
    <citation type="journal article" date="1997" name="J. Biol. Chem.">
        <title>Molecular cloning of human plasma membrane phospholipid scramblase. A protein mediating transbilayer movement of plasma membrane phospholipids.</title>
        <authorList>
            <person name="Zhou Q."/>
            <person name="Zhao J."/>
            <person name="Stout J.G."/>
            <person name="Luhm R.A."/>
            <person name="Wiedmer T."/>
            <person name="Sims P.J."/>
        </authorList>
    </citation>
    <scope>NUCLEOTIDE SEQUENCE [MRNA] (ISOFORM 1)</scope>
    <scope>PROTEIN SEQUENCE OF 87-118</scope>
    <scope>FUNCTION</scope>
    <scope>TRANSPORTER ACTIVITY</scope>
    <scope>TISSUE SPECIFICITY</scope>
    <source>
        <tissue>Erythrocyte</tissue>
    </source>
</reference>
<reference key="2">
    <citation type="journal article" date="1998" name="Biochem. Biophys. Res. Commun.">
        <title>Identity of human normal counterpart (MmTRA1b) of mouse leukemogenesis-associated gene (MmTRA1a) product as plasma membrane phospholipid scramblase and chromosome mapping of the human MmTRA1b/phospholipid scramblase gene.</title>
        <authorList>
            <person name="Kasukabe T."/>
            <person name="Kobayashi H."/>
            <person name="Kaneko Y."/>
            <person name="Okabe-Kado J."/>
            <person name="Honma Y."/>
        </authorList>
    </citation>
    <scope>NUCLEOTIDE SEQUENCE [MRNA] (ISOFORM 1)</scope>
    <source>
        <tissue>Monocytic leukemia</tissue>
    </source>
</reference>
<reference key="3">
    <citation type="journal article" date="2000" name="Biochim. Biophys. Acta">
        <title>Identification of three new members of the phospholipid scramblase gene family.</title>
        <authorList>
            <person name="Wiedmer T."/>
            <person name="Zhou Q."/>
            <person name="Kwoh D.Y."/>
            <person name="Sims P.J."/>
        </authorList>
    </citation>
    <scope>NUCLEOTIDE SEQUENCE [GENOMIC DNA]</scope>
    <scope>TISSUE SPECIFICITY</scope>
</reference>
<reference key="4">
    <citation type="journal article" date="2004" name="Nat. Genet.">
        <title>Complete sequencing and characterization of 21,243 full-length human cDNAs.</title>
        <authorList>
            <person name="Ota T."/>
            <person name="Suzuki Y."/>
            <person name="Nishikawa T."/>
            <person name="Otsuki T."/>
            <person name="Sugiyama T."/>
            <person name="Irie R."/>
            <person name="Wakamatsu A."/>
            <person name="Hayashi K."/>
            <person name="Sato H."/>
            <person name="Nagai K."/>
            <person name="Kimura K."/>
            <person name="Makita H."/>
            <person name="Sekine M."/>
            <person name="Obayashi M."/>
            <person name="Nishi T."/>
            <person name="Shibahara T."/>
            <person name="Tanaka T."/>
            <person name="Ishii S."/>
            <person name="Yamamoto J."/>
            <person name="Saito K."/>
            <person name="Kawai Y."/>
            <person name="Isono Y."/>
            <person name="Nakamura Y."/>
            <person name="Nagahari K."/>
            <person name="Murakami K."/>
            <person name="Yasuda T."/>
            <person name="Iwayanagi T."/>
            <person name="Wagatsuma M."/>
            <person name="Shiratori A."/>
            <person name="Sudo H."/>
            <person name="Hosoiri T."/>
            <person name="Kaku Y."/>
            <person name="Kodaira H."/>
            <person name="Kondo H."/>
            <person name="Sugawara M."/>
            <person name="Takahashi M."/>
            <person name="Kanda K."/>
            <person name="Yokoi T."/>
            <person name="Furuya T."/>
            <person name="Kikkawa E."/>
            <person name="Omura Y."/>
            <person name="Abe K."/>
            <person name="Kamihara K."/>
            <person name="Katsuta N."/>
            <person name="Sato K."/>
            <person name="Tanikawa M."/>
            <person name="Yamazaki M."/>
            <person name="Ninomiya K."/>
            <person name="Ishibashi T."/>
            <person name="Yamashita H."/>
            <person name="Murakawa K."/>
            <person name="Fujimori K."/>
            <person name="Tanai H."/>
            <person name="Kimata M."/>
            <person name="Watanabe M."/>
            <person name="Hiraoka S."/>
            <person name="Chiba Y."/>
            <person name="Ishida S."/>
            <person name="Ono Y."/>
            <person name="Takiguchi S."/>
            <person name="Watanabe S."/>
            <person name="Yosida M."/>
            <person name="Hotuta T."/>
            <person name="Kusano J."/>
            <person name="Kanehori K."/>
            <person name="Takahashi-Fujii A."/>
            <person name="Hara H."/>
            <person name="Tanase T.-O."/>
            <person name="Nomura Y."/>
            <person name="Togiya S."/>
            <person name="Komai F."/>
            <person name="Hara R."/>
            <person name="Takeuchi K."/>
            <person name="Arita M."/>
            <person name="Imose N."/>
            <person name="Musashino K."/>
            <person name="Yuuki H."/>
            <person name="Oshima A."/>
            <person name="Sasaki N."/>
            <person name="Aotsuka S."/>
            <person name="Yoshikawa Y."/>
            <person name="Matsunawa H."/>
            <person name="Ichihara T."/>
            <person name="Shiohata N."/>
            <person name="Sano S."/>
            <person name="Moriya S."/>
            <person name="Momiyama H."/>
            <person name="Satoh N."/>
            <person name="Takami S."/>
            <person name="Terashima Y."/>
            <person name="Suzuki O."/>
            <person name="Nakagawa S."/>
            <person name="Senoh A."/>
            <person name="Mizoguchi H."/>
            <person name="Goto Y."/>
            <person name="Shimizu F."/>
            <person name="Wakebe H."/>
            <person name="Hishigaki H."/>
            <person name="Watanabe T."/>
            <person name="Sugiyama A."/>
            <person name="Takemoto M."/>
            <person name="Kawakami B."/>
            <person name="Yamazaki M."/>
            <person name="Watanabe K."/>
            <person name="Kumagai A."/>
            <person name="Itakura S."/>
            <person name="Fukuzumi Y."/>
            <person name="Fujimori Y."/>
            <person name="Komiyama M."/>
            <person name="Tashiro H."/>
            <person name="Tanigami A."/>
            <person name="Fujiwara T."/>
            <person name="Ono T."/>
            <person name="Yamada K."/>
            <person name="Fujii Y."/>
            <person name="Ozaki K."/>
            <person name="Hirao M."/>
            <person name="Ohmori Y."/>
            <person name="Kawabata A."/>
            <person name="Hikiji T."/>
            <person name="Kobatake N."/>
            <person name="Inagaki H."/>
            <person name="Ikema Y."/>
            <person name="Okamoto S."/>
            <person name="Okitani R."/>
            <person name="Kawakami T."/>
            <person name="Noguchi S."/>
            <person name="Itoh T."/>
            <person name="Shigeta K."/>
            <person name="Senba T."/>
            <person name="Matsumura K."/>
            <person name="Nakajima Y."/>
            <person name="Mizuno T."/>
            <person name="Morinaga M."/>
            <person name="Sasaki M."/>
            <person name="Togashi T."/>
            <person name="Oyama M."/>
            <person name="Hata H."/>
            <person name="Watanabe M."/>
            <person name="Komatsu T."/>
            <person name="Mizushima-Sugano J."/>
            <person name="Satoh T."/>
            <person name="Shirai Y."/>
            <person name="Takahashi Y."/>
            <person name="Nakagawa K."/>
            <person name="Okumura K."/>
            <person name="Nagase T."/>
            <person name="Nomura N."/>
            <person name="Kikuchi H."/>
            <person name="Masuho Y."/>
            <person name="Yamashita R."/>
            <person name="Nakai K."/>
            <person name="Yada T."/>
            <person name="Nakamura Y."/>
            <person name="Ohara O."/>
            <person name="Isogai T."/>
            <person name="Sugano S."/>
        </authorList>
    </citation>
    <scope>NUCLEOTIDE SEQUENCE [LARGE SCALE MRNA] (ISOFORMS 1 AND 2)</scope>
    <source>
        <tissue>Kidney</tissue>
        <tissue>Placenta</tissue>
    </source>
</reference>
<reference key="5">
    <citation type="journal article" date="2006" name="Nature">
        <title>The DNA sequence, annotation and analysis of human chromosome 3.</title>
        <authorList>
            <person name="Muzny D.M."/>
            <person name="Scherer S.E."/>
            <person name="Kaul R."/>
            <person name="Wang J."/>
            <person name="Yu J."/>
            <person name="Sudbrak R."/>
            <person name="Buhay C.J."/>
            <person name="Chen R."/>
            <person name="Cree A."/>
            <person name="Ding Y."/>
            <person name="Dugan-Rocha S."/>
            <person name="Gill R."/>
            <person name="Gunaratne P."/>
            <person name="Harris R.A."/>
            <person name="Hawes A.C."/>
            <person name="Hernandez J."/>
            <person name="Hodgson A.V."/>
            <person name="Hume J."/>
            <person name="Jackson A."/>
            <person name="Khan Z.M."/>
            <person name="Kovar-Smith C."/>
            <person name="Lewis L.R."/>
            <person name="Lozado R.J."/>
            <person name="Metzker M.L."/>
            <person name="Milosavljevic A."/>
            <person name="Miner G.R."/>
            <person name="Morgan M.B."/>
            <person name="Nazareth L.V."/>
            <person name="Scott G."/>
            <person name="Sodergren E."/>
            <person name="Song X.-Z."/>
            <person name="Steffen D."/>
            <person name="Wei S."/>
            <person name="Wheeler D.A."/>
            <person name="Wright M.W."/>
            <person name="Worley K.C."/>
            <person name="Yuan Y."/>
            <person name="Zhang Z."/>
            <person name="Adams C.Q."/>
            <person name="Ansari-Lari M.A."/>
            <person name="Ayele M."/>
            <person name="Brown M.J."/>
            <person name="Chen G."/>
            <person name="Chen Z."/>
            <person name="Clendenning J."/>
            <person name="Clerc-Blankenburg K.P."/>
            <person name="Chen R."/>
            <person name="Chen Z."/>
            <person name="Davis C."/>
            <person name="Delgado O."/>
            <person name="Dinh H.H."/>
            <person name="Dong W."/>
            <person name="Draper H."/>
            <person name="Ernst S."/>
            <person name="Fu G."/>
            <person name="Gonzalez-Garay M.L."/>
            <person name="Garcia D.K."/>
            <person name="Gillett W."/>
            <person name="Gu J."/>
            <person name="Hao B."/>
            <person name="Haugen E."/>
            <person name="Havlak P."/>
            <person name="He X."/>
            <person name="Hennig S."/>
            <person name="Hu S."/>
            <person name="Huang W."/>
            <person name="Jackson L.R."/>
            <person name="Jacob L.S."/>
            <person name="Kelly S.H."/>
            <person name="Kube M."/>
            <person name="Levy R."/>
            <person name="Li Z."/>
            <person name="Liu B."/>
            <person name="Liu J."/>
            <person name="Liu W."/>
            <person name="Lu J."/>
            <person name="Maheshwari M."/>
            <person name="Nguyen B.-V."/>
            <person name="Okwuonu G.O."/>
            <person name="Palmeiri A."/>
            <person name="Pasternak S."/>
            <person name="Perez L.M."/>
            <person name="Phelps K.A."/>
            <person name="Plopper F.J."/>
            <person name="Qiang B."/>
            <person name="Raymond C."/>
            <person name="Rodriguez R."/>
            <person name="Saenphimmachak C."/>
            <person name="Santibanez J."/>
            <person name="Shen H."/>
            <person name="Shen Y."/>
            <person name="Subramanian S."/>
            <person name="Tabor P.E."/>
            <person name="Verduzco D."/>
            <person name="Waldron L."/>
            <person name="Wang J."/>
            <person name="Wang J."/>
            <person name="Wang Q."/>
            <person name="Williams G.A."/>
            <person name="Wong G.K.-S."/>
            <person name="Yao Z."/>
            <person name="Zhang J."/>
            <person name="Zhang X."/>
            <person name="Zhao G."/>
            <person name="Zhou J."/>
            <person name="Zhou Y."/>
            <person name="Nelson D."/>
            <person name="Lehrach H."/>
            <person name="Reinhardt R."/>
            <person name="Naylor S.L."/>
            <person name="Yang H."/>
            <person name="Olson M."/>
            <person name="Weinstock G."/>
            <person name="Gibbs R.A."/>
        </authorList>
    </citation>
    <scope>NUCLEOTIDE SEQUENCE [LARGE SCALE GENOMIC DNA]</scope>
</reference>
<reference key="6">
    <citation type="submission" date="2005-09" db="EMBL/GenBank/DDBJ databases">
        <authorList>
            <person name="Mural R.J."/>
            <person name="Istrail S."/>
            <person name="Sutton G.G."/>
            <person name="Florea L."/>
            <person name="Halpern A.L."/>
            <person name="Mobarry C.M."/>
            <person name="Lippert R."/>
            <person name="Walenz B."/>
            <person name="Shatkay H."/>
            <person name="Dew I."/>
            <person name="Miller J.R."/>
            <person name="Flanigan M.J."/>
            <person name="Edwards N.J."/>
            <person name="Bolanos R."/>
            <person name="Fasulo D."/>
            <person name="Halldorsson B.V."/>
            <person name="Hannenhalli S."/>
            <person name="Turner R."/>
            <person name="Yooseph S."/>
            <person name="Lu F."/>
            <person name="Nusskern D.R."/>
            <person name="Shue B.C."/>
            <person name="Zheng X.H."/>
            <person name="Zhong F."/>
            <person name="Delcher A.L."/>
            <person name="Huson D.H."/>
            <person name="Kravitz S.A."/>
            <person name="Mouchard L."/>
            <person name="Reinert K."/>
            <person name="Remington K.A."/>
            <person name="Clark A.G."/>
            <person name="Waterman M.S."/>
            <person name="Eichler E.E."/>
            <person name="Adams M.D."/>
            <person name="Hunkapiller M.W."/>
            <person name="Myers E.W."/>
            <person name="Venter J.C."/>
        </authorList>
    </citation>
    <scope>NUCLEOTIDE SEQUENCE [LARGE SCALE GENOMIC DNA]</scope>
</reference>
<reference key="7">
    <citation type="journal article" date="2004" name="Genome Res.">
        <title>The status, quality, and expansion of the NIH full-length cDNA project: the Mammalian Gene Collection (MGC).</title>
        <authorList>
            <consortium name="The MGC Project Team"/>
        </authorList>
    </citation>
    <scope>NUCLEOTIDE SEQUENCE [LARGE SCALE MRNA] (ISOFORM 1)</scope>
    <source>
        <tissue>Colon</tissue>
        <tissue>Uterus</tissue>
    </source>
</reference>
<reference key="8">
    <citation type="journal article" date="1996" name="J. Biol. Chem.">
        <title>Isolation of an erythrocyte membrane protein that mediates Ca2+-dependent transbilayer movement of phospholipid.</title>
        <authorList>
            <person name="Basse F."/>
            <person name="Stout J.G."/>
            <person name="Sims P.J."/>
            <person name="Wiedmer T."/>
        </authorList>
    </citation>
    <scope>FUNCTION</scope>
    <scope>TRANSPORTER ACTIVITY</scope>
    <scope>COFACTOR</scope>
    <source>
        <tissue>Erythrocyte</tissue>
    </source>
</reference>
<reference key="9">
    <citation type="journal article" date="2000" name="J. Biol. Chem.">
        <title>Regulation of phospholipid scramblase activity during apoptosis and cell activation by protein kinase Cdelta.</title>
        <authorList>
            <person name="Frasch S.C."/>
            <person name="Henson P.M."/>
            <person name="Kailey J.M."/>
            <person name="Richter D.A."/>
            <person name="Janes M.S."/>
            <person name="Fadok V.A."/>
            <person name="Bratton D.L."/>
        </authorList>
    </citation>
    <scope>FUNCTION</scope>
    <scope>TRANSPORTER ACTIVITY</scope>
    <scope>ACTIVITY REGULATION</scope>
    <scope>PHOSPHORYLATION AT THR-161</scope>
    <scope>MUTAGENESIS OF THR-161</scope>
</reference>
<reference key="10">
    <citation type="journal article" date="2001" name="J. Biol. Chem.">
        <title>c-Abl tyrosine kinase binds and phosphorylates phospholipid scramblase 1.</title>
        <authorList>
            <person name="Sun J."/>
            <person name="Zhao J."/>
            <person name="Schwartz M.A."/>
            <person name="Wang J.Y."/>
            <person name="Wiedmer T."/>
            <person name="Sims P.J."/>
        </authorList>
    </citation>
    <scope>INTERACTION WITH ABL</scope>
    <scope>PHOSPHORYLATION AT TYR-69 AND TYR-74</scope>
    <scope>MUTAGENESIS OF TYR-69 AND TYR-74</scope>
</reference>
<reference key="11">
    <citation type="journal article" date="1998" name="Biochemistry">
        <title>Palmitoylation of phospholipid scramblase is required for normal function in promoting Ca2+-activated transbilayer movement of membrane phospholipids.</title>
        <authorList>
            <person name="Zhao J."/>
            <person name="Zhou Q."/>
            <person name="Wiedmer T."/>
            <person name="Sims P.J."/>
        </authorList>
    </citation>
    <scope>FUNCTION</scope>
    <scope>TRANSPORTER ACTIVITY</scope>
    <scope>PALMITOYLATION</scope>
</reference>
<reference key="12">
    <citation type="journal article" date="1998" name="Biochemistry">
        <title>Identity of a conserved motif in phospholipid scramblase that is required for Ca2+-accelerated transbilayer movement of membrane phospholipids.</title>
        <authorList>
            <person name="Zhou Q."/>
            <person name="Sims P.J."/>
            <person name="Wiedmer T."/>
        </authorList>
    </citation>
    <scope>FUNCTION</scope>
    <scope>TRANSPORTER ACTIVITY</scope>
    <scope>MUTAGENESIS OF ASP-273; ASP-275; PHE-277; ILE-279; PHE-281 AND ASP-284</scope>
</reference>
<reference key="13">
    <citation type="journal article" date="2003" name="Biochemistry">
        <title>Palmitoylation of phospholipid scramblase 1 controls its distribution between nucleus and plasma membrane.</title>
        <authorList>
            <person name="Wiedmer T."/>
            <person name="Zhao J."/>
            <person name="Nanjundan M."/>
            <person name="Sims P.J."/>
        </authorList>
    </citation>
    <scope>SUBCELLULAR LOCATION</scope>
    <scope>PALMITOYLATION AT CYS-184; CYS-185; CYS-186; CYS-188 AND CYS-189</scope>
    <scope>MUTAGENESIS OF 184-CYS--CYS-189</scope>
</reference>
<reference key="14">
    <citation type="journal article" date="2004" name="J. Virol.">
        <title>Phospholipid scramblase 1 potentiates the antiviral activity of interferon.</title>
        <authorList>
            <person name="Dong B."/>
            <person name="Zhou Q."/>
            <person name="Zhao J."/>
            <person name="Zhou A."/>
            <person name="Harty R.N."/>
            <person name="Bose S."/>
            <person name="Banerjee A."/>
            <person name="Slee R."/>
            <person name="Guenther J."/>
            <person name="Williams B.R.G."/>
            <person name="Wiedmer T."/>
            <person name="Sims P.J."/>
            <person name="Silverman R.H."/>
        </authorList>
    </citation>
    <scope>FUNCTION</scope>
    <scope>INDUCTION (MICROBIAL INFECTION)</scope>
</reference>
<reference key="15">
    <citation type="journal article" date="2005" name="J. Biol. Chem.">
        <title>Phospholipid scramblase 1 binds to the promoter region of the inositol 1,4,5-triphosphate receptor type 1 gene to enhance its expression.</title>
        <authorList>
            <person name="Zhou Q."/>
            <person name="Ben-Efraim I."/>
            <person name="Bigcas J.L."/>
            <person name="Junqueira D."/>
            <person name="Wiedmer T."/>
            <person name="Sims P.J."/>
        </authorList>
    </citation>
    <scope>SUBCELLULAR LOCATION</scope>
    <scope>DNA-BINDING</scope>
</reference>
<reference key="16">
    <citation type="journal article" date="2007" name="Nucleic Acids Res.">
        <title>Nuclear interactions of topoisomerase II alpha and beta with phospholipid scramblase 1.</title>
        <authorList>
            <person name="Wyles J.P."/>
            <person name="Wu Z."/>
            <person name="Mirski S.E."/>
            <person name="Cole S.P."/>
        </authorList>
    </citation>
    <scope>FUNCTION</scope>
    <scope>SUBCELLULAR LOCATION</scope>
    <scope>INTERACTION WITH TOP2A AND TOP2B</scope>
</reference>
<reference key="17">
    <citation type="journal article" date="2008" name="Biotechnol. Lett.">
        <title>Over-expression of recombinant human phospholipid scramblase 1 in E. coli and its purification from inclusion bodies.</title>
        <authorList>
            <person name="Sahu S.K."/>
            <person name="Gopala Krishna A."/>
            <person name="Gummadi S.N."/>
        </authorList>
    </citation>
    <scope>FUNCTION</scope>
    <scope>TRANSPORTER ACTIVITY</scope>
</reference>
<reference key="18">
    <citation type="journal article" date="2011" name="BMC Syst. Biol.">
        <title>Initial characterization of the human central proteome.</title>
        <authorList>
            <person name="Burkard T.R."/>
            <person name="Planyavsky M."/>
            <person name="Kaupe I."/>
            <person name="Breitwieser F.P."/>
            <person name="Buerckstuemmer T."/>
            <person name="Bennett K.L."/>
            <person name="Superti-Furga G."/>
            <person name="Colinge J."/>
        </authorList>
    </citation>
    <scope>IDENTIFICATION BY MASS SPECTROMETRY [LARGE SCALE ANALYSIS]</scope>
</reference>
<reference key="19">
    <citation type="journal article" date="2011" name="FEBS Lett.">
        <title>Phospholipid scramblase 1 mediates hepatitis C virus entry into host cells.</title>
        <authorList>
            <person name="Gong Q."/>
            <person name="Cheng M."/>
            <person name="Chen H."/>
            <person name="Liu X."/>
            <person name="Si Y."/>
            <person name="Yang Y."/>
            <person name="Yuan Y."/>
            <person name="Jin C."/>
            <person name="Yang W."/>
            <person name="He F."/>
            <person name="Wang J."/>
        </authorList>
    </citation>
    <scope>FUNCTION (MICROBIAL INFECTION)</scope>
    <scope>INTERACTION WITH HCV E1 AND E2 PROTEINS (MICROBIAL INFECTION) AND OCLN</scope>
</reference>
<reference key="20">
    <citation type="journal article" date="2012" name="Virology">
        <title>Human phospholipid scramblase 1 interacts with and regulates transactivation of HTLV-1 Tax.</title>
        <authorList>
            <person name="Kusano S."/>
            <person name="Eizuru Y."/>
        </authorList>
    </citation>
    <scope>FUNCTION</scope>
    <scope>INTERACTION WITH HUMAN T-CELL LEUKEMIA VIRUS TYPE-1 PROTEIN TAX (MICROBIAL INFECTION)</scope>
    <scope>SUBCELLULAR LOCATION</scope>
</reference>
<reference key="21">
    <citation type="journal article" date="2012" name="Mol. Cell. Biochem.">
        <title>Identification of PLSCR1 as a protein that interacts with RELT family members.</title>
        <authorList>
            <person name="Cusick J.K."/>
            <person name="Mustian A."/>
            <person name="Jacobs A.T."/>
            <person name="Reyland M.E."/>
        </authorList>
    </citation>
    <scope>INTERACTION WITH RELT; RELL1; RELL2 AND OXSR1</scope>
    <scope>PHOSPHORYLATION</scope>
    <scope>SUBCELLULAR LOCATION</scope>
</reference>
<reference key="22">
    <citation type="journal article" date="2013" name="Biochem. Biophys. Res. Commun.">
        <title>Interaction of the phospholipid scramblase 1 with HIV-1 Tat results in the repression of Tat-dependent transcription.</title>
        <authorList>
            <person name="Kusano S."/>
            <person name="Eizuru Y."/>
        </authorList>
    </citation>
    <scope>FUNCTION</scope>
    <scope>INTERACTION WITH HUMAN IMMUNODEFICIENCY VIRUS TYPE-1 PROTEIN TAT (MICROBIAL INFECTION)</scope>
    <scope>SUBCELLULAR LOCATION</scope>
</reference>
<reference key="23">
    <citation type="journal article" date="2013" name="Chem. Res. Toxicol.">
        <title>Biochemical evidence for lead and mercury induced transbilayer movement of phospholipids mediated by human phospholipid scramblase 1.</title>
        <authorList>
            <person name="Shettihalli A.K."/>
            <person name="Gummadi S.N."/>
        </authorList>
    </citation>
    <scope>FUNCTION</scope>
    <scope>TRANSPORTER ACTIVITY</scope>
    <scope>COFACTOR</scope>
    <scope>ACTIVITY REGULATION</scope>
</reference>
<reference key="24">
    <citation type="journal article" date="2013" name="FEBS J.">
        <title>The single C-terminal helix of human phospholipid scramblase 1 is required for membrane insertion and scrambling activity.</title>
        <authorList>
            <person name="Francis V.G."/>
            <person name="Mohammed A.M."/>
            <person name="Aradhyam G.K."/>
            <person name="Gummadi S.N."/>
        </authorList>
    </citation>
    <scope>FUNCTION</scope>
    <scope>TRANSPORTER ACTIVITY</scope>
    <scope>COFACTOR</scope>
    <scope>SUBCELLULAR LOCATION</scope>
    <scope>TRANSMEMBRANE DOMAIN</scope>
</reference>
<reference key="25">
    <citation type="journal article" date="2014" name="J. Biol. Chem.">
        <title>N-terminal proline-rich domain is required for scrambling activity of human phospholipid scramblases.</title>
        <authorList>
            <person name="Rayala S."/>
            <person name="Francis V.G."/>
            <person name="Sivagnanam U."/>
            <person name="Gummadi S.N."/>
        </authorList>
    </citation>
    <scope>FUNCTION</scope>
    <scope>TRANSPORTER ACTIVITY</scope>
    <scope>PROLINE-RICH DOMAIN</scope>
    <scope>SUBCELLULAR LOCATION</scope>
    <scope>COFACTOR</scope>
    <scope>SUBUNIT</scope>
</reference>
<reference key="26">
    <citation type="journal article" date="2014" name="J. Membr. Biol.">
        <title>The C-terminal transmembrane domain of human phospholipid scramblase 1 is essential for the protein flip-flop activity and Ca+2-binding.</title>
        <authorList>
            <person name="Sanchez-Magraner L."/>
            <person name="Posada I.M."/>
            <person name="Andraka N."/>
            <person name="Contreras F.X."/>
            <person name="Viguera A.R."/>
            <person name="Guerin D.M."/>
            <person name="Arrondo J.L."/>
            <person name="Monaco H.L."/>
            <person name="Goni F.M."/>
        </authorList>
    </citation>
    <scope>FUNCTION</scope>
    <scope>TRANSPORTER ACTIVITY</scope>
    <scope>COFACTOR</scope>
    <scope>TRANSMEMBRANE DOMAIN</scope>
</reference>
<reference key="27">
    <citation type="journal article" date="2014" name="J. Proteomics">
        <title>An enzyme assisted RP-RPLC approach for in-depth analysis of human liver phosphoproteome.</title>
        <authorList>
            <person name="Bian Y."/>
            <person name="Song C."/>
            <person name="Cheng K."/>
            <person name="Dong M."/>
            <person name="Wang F."/>
            <person name="Huang J."/>
            <person name="Sun D."/>
            <person name="Wang L."/>
            <person name="Ye M."/>
            <person name="Zou H."/>
        </authorList>
    </citation>
    <scope>IDENTIFICATION BY MASS SPECTROMETRY [LARGE SCALE ANALYSIS]</scope>
    <source>
        <tissue>Liver</tissue>
    </source>
</reference>
<reference key="28">
    <citation type="journal article" date="2015" name="J. Proteome Res.">
        <title>Interactome map reveals phospholipid scramblase 1 as a novel regulator of hepatitis B virus x protein.</title>
        <authorList>
            <person name="Yuan Y."/>
            <person name="Tian C."/>
            <person name="Gong Q."/>
            <person name="Shang L."/>
            <person name="Zhang Y."/>
            <person name="Jin C."/>
            <person name="He F."/>
            <person name="Wang J."/>
        </authorList>
    </citation>
    <scope>FUNCTION</scope>
    <scope>INTERACTION WITH HEPATITIS B VIRUS PROTEIN HBX (MICROBIAL INFECTION)</scope>
</reference>
<reference key="29">
    <citation type="journal article" date="2016" name="BMC Biochem.">
        <title>Identification and characterization of the novel nuclease activity of human phospholipid scramblase 1.</title>
        <authorList>
            <person name="Sivagnanam U."/>
            <person name="Narayana Murthy S."/>
            <person name="Gummadi S.N."/>
        </authorList>
    </citation>
    <scope>FUNCTION AS NUCLEASE</scope>
    <scope>COFACTOR</scope>
    <scope>BIOPHYSICOCHEMICAL PROPERTIES</scope>
    <scope>MUTAGENESIS OF HIS-12; HIS-53; HIS-111; HIS-211; HIS-262 AND ASP-275</scope>
</reference>
<reference key="30">
    <citation type="journal article" date="2016" name="PLoS ONE">
        <title>Phospholipid Scramblase 1 Modulates FcR-Mediated Phagocytosis in Differentiated Macrophages.</title>
        <authorList>
            <person name="Herate C."/>
            <person name="Ramdani G."/>
            <person name="Grant N.J."/>
            <person name="Marion S."/>
            <person name="Gasman S."/>
            <person name="Niedergang F."/>
            <person name="Benichou S."/>
            <person name="Bouchet J."/>
        </authorList>
    </citation>
    <scope>FUNCTION</scope>
    <scope>SUBCELLULAR LOCATION</scope>
    <scope>TOPOLOGY</scope>
    <scope>INDUCTION</scope>
</reference>
<reference key="31">
    <citation type="journal article" date="2018" name="Sci. Rep.">
        <title>Pb(II) Induces Scramblase Activation and Ceramide-Domain Generation in Red Blood Cells.</title>
        <authorList>
            <person name="Ahyayauch H."/>
            <person name="Garcia-Arribas A.B."/>
            <person name="Sot J."/>
            <person name="Gonzalez-Ramirez E.J."/>
            <person name="Busto J.V."/>
            <person name="Monasterio B.G."/>
            <person name="Jimenez-Rojo N."/>
            <person name="Contreras F.X."/>
            <person name="Rendon-Ramirez A."/>
            <person name="Martin C."/>
            <person name="Alonso A."/>
            <person name="Goni F.M."/>
        </authorList>
    </citation>
    <scope>FUNCTION</scope>
    <scope>TRANSPORTER ACTIVITY</scope>
    <scope>ACTIVITY REGULATION</scope>
</reference>
<reference key="32">
    <citation type="journal article" date="2018" name="PLoS Pathog.">
        <title>Phospholipid scramblase 1 interacts with influenza A virus NP, impairing its nuclear import and thereby suppressing virus replication.</title>
        <authorList>
            <person name="Luo W."/>
            <person name="Zhang J."/>
            <person name="Liang L."/>
            <person name="Wang G."/>
            <person name="Li Q."/>
            <person name="Zhu P."/>
            <person name="Zhou Y."/>
            <person name="Li J."/>
            <person name="Zhao Y."/>
            <person name="Sun N."/>
            <person name="Huang S."/>
            <person name="Zhou C."/>
            <person name="Chang Y."/>
            <person name="Cui P."/>
            <person name="Chen P."/>
            <person name="Jiang Y."/>
            <person name="Deng G."/>
            <person name="Bu Z."/>
            <person name="Li C."/>
            <person name="Jiang L."/>
            <person name="Chen H."/>
        </authorList>
    </citation>
    <scope>FUNCTION</scope>
    <scope>SUBCELLULAR LOCATION</scope>
</reference>
<reference key="33">
    <citation type="journal article" date="2019" name="J. Biol. Chem.">
        <title>Interaction of phospholipid scramblase 1 with the Epstein-Barr virus protein BZLF1 represses BZLF1-mediated lytic gene transcription.</title>
        <authorList>
            <person name="Kusano S."/>
            <person name="Ikeda M."/>
        </authorList>
    </citation>
    <scope>FUNCTION</scope>
    <scope>INTERACTION WITH EPSTEIN-BARR VIRUS BZLF1 (MICROBIAL INFECTION)</scope>
</reference>
<reference key="34">
    <citation type="journal article" date="2020" name="Cells">
        <title>Transient Receptor Potential Canonical 5-Scramblase Signaling Complex Mediates Neuronal Phosphatidylserine Externalization and Apoptosis.</title>
        <authorList>
            <person name="Guo J."/>
            <person name="Li J."/>
            <person name="Xia L."/>
            <person name="Wang Y."/>
            <person name="Zhu J."/>
            <person name="Du J."/>
            <person name="Lu Y."/>
            <person name="Liu G."/>
            <person name="Yao X."/>
            <person name="Shen B."/>
        </authorList>
    </citation>
    <scope>FUNCTION</scope>
    <scope>TRANSPORTER ACTIVITY</scope>
    <scope>INTERACTION WITH TRPC5</scope>
</reference>
<reference key="35">
    <citation type="journal article" date="2022" name="Microbiol. Spectr.">
        <title>The Interferon-Inducible Human PLSCR1 Protein Is a Restriction Factor of Human Cytomegalovirus.</title>
        <authorList>
            <person name="Sadanari H."/>
            <person name="Takemoto M."/>
            <person name="Ishida T."/>
            <person name="Otagiri H."/>
            <person name="Daikoku T."/>
            <person name="Murayama T."/>
            <person name="Kusano S."/>
        </authorList>
    </citation>
    <scope>FUNCTION</scope>
    <scope>INDUCTION BY TYPE I INTERFERON AND VIRAL INFECTION</scope>
    <scope>INTERACTION WITH HUMAN CYTOMEGALOVIRUS PROTEINS IE1 AND IE2 (MICROBIAL INFECTION)</scope>
</reference>
<reference key="36">
    <citation type="journal article" date="2022" name="Sci. Rep.">
        <title>ILDR1 promotes influenza A virus replication through binding to PLSCR1.</title>
        <authorList>
            <person name="Liu Y."/>
            <person name="Lin S."/>
            <person name="Xie Y."/>
            <person name="Zhao L."/>
            <person name="Du H."/>
            <person name="Yang S."/>
            <person name="Yin B."/>
            <person name="Li G."/>
            <person name="Zhao Z."/>
            <person name="Huang Z."/>
            <person name="Xu Z."/>
            <person name="Wu J."/>
        </authorList>
    </citation>
    <scope>INTERACTION WITH ILDR1</scope>
    <scope>SUBCELLULAR LOCATION</scope>
    <scope>INTERACTION WITH INFLUENZA VIRUS NUCLEOPROTEIN NP (MICROBIAL INFECTION)</scope>
    <scope>FUNCTION</scope>
</reference>
<reference key="37">
    <citation type="journal article" date="2023" name="Nature">
        <title>PLSCR1 is a cell-autonomous defence factor against SARS-CoV-2 infection.</title>
        <authorList>
            <person name="Xu D."/>
            <person name="Jiang W."/>
            <person name="Wu L."/>
            <person name="Gaudet R.G."/>
            <person name="Park E.S."/>
            <person name="Su M."/>
            <person name="Cheppali S.K."/>
            <person name="Cheemarla N.R."/>
            <person name="Kumar P."/>
            <person name="Uchil P.D."/>
            <person name="Grover J.R."/>
            <person name="Foxman E.F."/>
            <person name="Brown C.M."/>
            <person name="Stansfeld P.J."/>
            <person name="Bewersdorf J."/>
            <person name="Mothes W."/>
            <person name="Karatekin E."/>
            <person name="Wilen C.B."/>
            <person name="MacMicking J.D."/>
        </authorList>
    </citation>
    <scope>FUNCTION</scope>
    <scope>SUBCELLULAR LOCATION</scope>
    <scope>MUTAGENESIS OF PHE-281 AND 184-CYS--CYS-189</scope>
    <scope>CHARACTERIZATION OF TYR-262</scope>
</reference>
<reference key="38">
    <citation type="journal article" date="2005" name="J. Biol. Chem.">
        <title>Phospholipid scramblase 1 contains a nonclassical nuclear localization signal with unique binding site in importin alpha.</title>
        <authorList>
            <person name="Chen M.H."/>
            <person name="Ben-Efraim I."/>
            <person name="Mitrousis G."/>
            <person name="Walker-Kopp N."/>
            <person name="Sims P.J."/>
            <person name="Cingolani G."/>
        </authorList>
    </citation>
    <scope>X-RAY CRYSTALLOGRAPHY (2.2 ANGSTROMS) OF 257-266 IN COMPLEX WITH MOUSE KPNA2</scope>
    <scope>NUCLEAR LOCALIZATION SIGNAL</scope>
    <scope>MUTAGENESIS OF 184-CYS--CYS-189</scope>
</reference>
<proteinExistence type="evidence at protein level"/>
<organism>
    <name type="scientific">Homo sapiens</name>
    <name type="common">Human</name>
    <dbReference type="NCBI Taxonomy" id="9606"/>
    <lineage>
        <taxon>Eukaryota</taxon>
        <taxon>Metazoa</taxon>
        <taxon>Chordata</taxon>
        <taxon>Craniata</taxon>
        <taxon>Vertebrata</taxon>
        <taxon>Euteleostomi</taxon>
        <taxon>Mammalia</taxon>
        <taxon>Eutheria</taxon>
        <taxon>Euarchontoglires</taxon>
        <taxon>Primates</taxon>
        <taxon>Haplorrhini</taxon>
        <taxon>Catarrhini</taxon>
        <taxon>Hominidae</taxon>
        <taxon>Homo</taxon>
    </lineage>
</organism>
<comment type="function">
    <text evidence="1 4 8 11 12 13 15 16 17 18 19 20 21 22 23 25 26 27 28 30 31 32 33 34">Catalyzes calcium-induced ATP-independent rapid bidirectional and non-specific movement of phospholipids (lipid scrambling or lipid flip-flop) between the inner and outer leaflet of the plasma membrane resulting in collapse of the phospholipid asymmetry which leads to phosphatidylserine externalization on the cell surface (PubMed:10770950, PubMed:18629440, PubMed:23590222, PubMed:23659204, PubMed:24343571, PubMed:24648509, PubMed:29748552, PubMed:32110987, PubMed:8663431, PubMed:9218461, PubMed:9485382, PubMed:9572851). Mediates calcium-dependent phosphatidylserine externalization and apoptosis in neurons via its association with TRPC5 (By similarity). Also exhibits magnesium-dependent nuclease activity against double-stranded DNA and RNA but not single-stranded DNA and can enhance DNA decatenation mediated by TOP2A (PubMed:17567603, PubMed:27206388). Negatively regulates FcR-mediated phagocytosis in differentiated macrophages (PubMed:26745724). May contribute to cytokine-regulated cell proliferation and differentiation (By similarity). May play a role in the antiviral response of interferon (IFN) by amplifying and enhancing the IFN response through increased expression of select subset of potent antiviral genes (PubMed:15308695). Inhibits the functions of viral transactivators, including human T-cell leukemia virus (HTLV)-1 protein Tax, human immunodeficiency virus (HIV)-1 Tat, human hepatitis B virus (HBV) HBx, Epstein-Barr virus (EBV) BZLF1 and human cytomegalovirus IE1 and IE2 proteins through direct interactions (PubMed:22789739, PubMed:23501106, PubMed:25365352, PubMed:31434743, PubMed:35138119). Also mediates the inhibition of influenza virus infection by preventing nuclear import of the viral nucleoprotein/NP (PubMed:29352288, PubMed:35595813). Plays a crucial role as a defense factor against SARS-CoV-2 independently of its scramblase activity by directly targeting nascent viral vesicles to prevent virus-membrane fusion and the release of viral RNA into the host-cell cytosol (PubMed:37438530).</text>
</comment>
<comment type="function">
    <text evidence="13">(Microbial infection) Acts as an attachment receptor for HCV.</text>
</comment>
<comment type="catalytic activity">
    <reaction evidence="4 12 17 18 19 20 31 32 33 34">
        <text>a 1,2-diacyl-sn-glycero-3-phosphocholine(in) = a 1,2-diacyl-sn-glycero-3-phosphocholine(out)</text>
        <dbReference type="Rhea" id="RHEA:38571"/>
        <dbReference type="ChEBI" id="CHEBI:57643"/>
    </reaction>
    <physiologicalReaction direction="left-to-right" evidence="39">
        <dbReference type="Rhea" id="RHEA:38572"/>
    </physiologicalReaction>
    <physiologicalReaction direction="right-to-left" evidence="40">
        <dbReference type="Rhea" id="RHEA:38573"/>
    </physiologicalReaction>
</comment>
<comment type="catalytic activity">
    <reaction evidence="12">
        <text>a 1,2-diacyl-sn-glycero-3-phosphoethanolamine(in) = a 1,2-diacyl-sn-glycero-3-phosphoethanolamine(out)</text>
        <dbReference type="Rhea" id="RHEA:38895"/>
        <dbReference type="ChEBI" id="CHEBI:64612"/>
    </reaction>
    <physiologicalReaction direction="left-to-right" evidence="39">
        <dbReference type="Rhea" id="RHEA:38896"/>
    </physiologicalReaction>
</comment>
<comment type="catalytic activity">
    <reaction evidence="18 25 42">
        <text>a 1,2-diacyl-sn-glycero-3-phospho-L-serine(in) = a 1,2-diacyl-sn-glycero-3-phospho-L-serine(out)</text>
        <dbReference type="Rhea" id="RHEA:38663"/>
        <dbReference type="ChEBI" id="CHEBI:57262"/>
    </reaction>
    <physiologicalReaction direction="left-to-right" evidence="41">
        <dbReference type="Rhea" id="RHEA:38664"/>
    </physiologicalReaction>
    <physiologicalReaction direction="right-to-left" evidence="40">
        <dbReference type="Rhea" id="RHEA:38665"/>
    </physiologicalReaction>
</comment>
<comment type="cofactor">
    <cofactor evidence="17 18 19 20 31">
        <name>Ca(2+)</name>
        <dbReference type="ChEBI" id="CHEBI:29108"/>
    </cofactor>
</comment>
<comment type="cofactor">
    <cofactor evidence="23">
        <name>Mg(2+)</name>
        <dbReference type="ChEBI" id="CHEBI:18420"/>
    </cofactor>
    <cofactor evidence="23">
        <name>Zn(2+)</name>
        <dbReference type="ChEBI" id="CHEBI:29105"/>
    </cofactor>
    <text evidence="23">Magnesium. Can also use zinc with lower efficiency.</text>
</comment>
<comment type="activity regulation">
    <text evidence="4 18 25">Activated by Pb(2+) and Hg(2+) ions (PubMed:23659204, PubMed:29748552). Phosphorylation at Thr-161 by PKC/PKCD increases its phospholipid scramblase activity during both cell stimulation and apoptosis (PubMed:10770950).</text>
</comment>
<comment type="biophysicochemical properties">
    <phDependence>
        <text evidence="23">Optimum pH is 8.0-9.0 for nuclease activity.</text>
    </phDependence>
    <temperatureDependence>
        <text evidence="23">Optimum temperature is 37 degrees Celsius for nuclease activity (PubMed:27206388). Activity reduced significantly beyond 45 degrees Celsius (PubMed:27206388).</text>
    </temperatureDependence>
</comment>
<comment type="subunit">
    <text evidence="1 6 11 13 14 20 27 29">Forms homooligomers in the presence of calcium (PubMed:24648509). Interacts with ABL (PubMed:11390389). Interacts with RELT, RELL1 and RELL2 (PubMed:22052202). Interacts with OXSR1 in the presence of RELT (PubMed:22052202). Interacts with TOP2A and TOP2B (PubMed:17567603). Interacts with OCLN (PubMed:21806988). Interacts with TRPC5 (PubMed:32110987). Interacts with TRPC1 and TRPC4 (By similarity). Interacts with ILDR1 (PubMed:35595813).</text>
</comment>
<comment type="subunit">
    <text evidence="13">(Microbial infection) Interacts with hepatitis C virus E1 and E2 glycoproteins.</text>
</comment>
<comment type="subunit">
    <text evidence="15">(Microbial infection) Interacts with T-cell leukemia virus (HTLV)-1 protein Tax (via N-terminus); this interaction represses Tax homodimerization.</text>
</comment>
<comment type="subunit">
    <text evidence="16">(Microbial infection) Interacts with HIV-1 protein Tat; this interaction represses the Tat-dependent transactivation of the HIV-1 long terminal repeat (LTR) and reduces the nuclear translocation of Tat.</text>
</comment>
<comment type="subunit">
    <text evidence="21">(Microbial infection) Interacts with hepatitis B virus protein HBx; this interaction promotes the proteasomal degradation of HBx.</text>
</comment>
<comment type="subunit">
    <text evidence="28">(Microbial infection) Interacts with human cytomegalovirus proteins IE1 and IE2.</text>
</comment>
<comment type="subunit">
    <text evidence="26">(Microbial infection) Interacts with Epstein Barr virus (EBV) lytic switch protein BZLF1; this interaction negatively regulates the transcriptional regulatory activity of BZLF1 by preventing the formation of the BZLF1-CBP complex.</text>
</comment>
<comment type="subunit">
    <text evidence="29">(Microbial infection) Interacts with influenza virus nucleoprotein NP.</text>
</comment>
<comment type="interaction">
    <interactant intactId="EBI-740019">
        <id>O15162</id>
    </interactant>
    <interactant intactId="EBI-77613">
        <id>P05067</id>
        <label>APP</label>
    </interactant>
    <organismsDiffer>false</organismsDiffer>
    <experiments>3</experiments>
</comment>
<comment type="interaction">
    <interactant intactId="EBI-740019">
        <id>O15162</id>
    </interactant>
    <interactant intactId="EBI-10174813">
        <id>A8KA13</id>
        <label>BCL6B</label>
    </interactant>
    <organismsDiffer>false</organismsDiffer>
    <experiments>3</experiments>
</comment>
<comment type="interaction">
    <interactant intactId="EBI-740019">
        <id>O15162</id>
    </interactant>
    <interactant intactId="EBI-744545">
        <id>Q8NEC5</id>
        <label>CATSPER1</label>
    </interactant>
    <organismsDiffer>false</organismsDiffer>
    <experiments>3</experiments>
</comment>
<comment type="interaction">
    <interactant intactId="EBI-740019">
        <id>O15162</id>
    </interactant>
    <interactant intactId="EBI-947551">
        <id>Q9H2X0</id>
        <label>CHRD</label>
    </interactant>
    <organismsDiffer>false</organismsDiffer>
    <experiments>3</experiments>
</comment>
<comment type="interaction">
    <interactant intactId="EBI-740019">
        <id>O15162</id>
    </interactant>
    <interactant intactId="EBI-358410">
        <id>Q16630</id>
        <label>CPSF6</label>
    </interactant>
    <organismsDiffer>false</organismsDiffer>
    <experiments>2</experiments>
</comment>
<comment type="interaction">
    <interactant intactId="EBI-740019">
        <id>O15162</id>
    </interactant>
    <interactant intactId="EBI-8636823">
        <id>Q9UBR2</id>
        <label>CTSZ</label>
    </interactant>
    <organismsDiffer>false</organismsDiffer>
    <experiments>3</experiments>
</comment>
<comment type="interaction">
    <interactant intactId="EBI-740019">
        <id>O15162</id>
    </interactant>
    <interactant intactId="EBI-724310">
        <id>Q15038</id>
        <label>DAZAP2</label>
    </interactant>
    <organismsDiffer>false</organismsDiffer>
    <experiments>4</experiments>
</comment>
<comment type="interaction">
    <interactant intactId="EBI-740019">
        <id>O15162</id>
    </interactant>
    <interactant intactId="EBI-745369">
        <id>Q9H4E7</id>
        <label>DEF6</label>
    </interactant>
    <organismsDiffer>false</organismsDiffer>
    <experiments>3</experiments>
</comment>
<comment type="interaction">
    <interactant intactId="EBI-740019">
        <id>O15162</id>
    </interactant>
    <interactant intactId="EBI-9679045">
        <id>Q9NQL9</id>
        <label>DMRT3</label>
    </interactant>
    <organismsDiffer>false</organismsDiffer>
    <experiments>3</experiments>
</comment>
<comment type="interaction">
    <interactant intactId="EBI-740019">
        <id>O15162</id>
    </interactant>
    <interactant intactId="EBI-448771">
        <id>Q92608</id>
        <label>DOCK2</label>
    </interactant>
    <organismsDiffer>false</organismsDiffer>
    <experiments>3</experiments>
</comment>
<comment type="interaction">
    <interactant intactId="EBI-740019">
        <id>O15162</id>
    </interactant>
    <interactant intactId="EBI-78505">
        <id>Q92731</id>
        <label>ESR2</label>
    </interactant>
    <organismsDiffer>false</organismsDiffer>
    <experiments>4</experiments>
</comment>
<comment type="interaction">
    <interactant intactId="EBI-740019">
        <id>O15162</id>
    </interactant>
    <interactant intactId="EBI-12259414">
        <id>Q92731-3</id>
        <label>ESR2</label>
    </interactant>
    <organismsDiffer>false</organismsDiffer>
    <experiments>4</experiments>
</comment>
<comment type="interaction">
    <interactant intactId="EBI-740019">
        <id>O15162</id>
    </interactant>
    <interactant intactId="EBI-739737">
        <id>Q01844</id>
        <label>EWSR1</label>
    </interactant>
    <organismsDiffer>false</organismsDiffer>
    <experiments>4</experiments>
</comment>
<comment type="interaction">
    <interactant intactId="EBI-740019">
        <id>O15162</id>
    </interactant>
    <interactant intactId="EBI-725515">
        <id>O43559</id>
        <label>FRS3</label>
    </interactant>
    <organismsDiffer>false</organismsDiffer>
    <experiments>3</experiments>
</comment>
<comment type="interaction">
    <interactant intactId="EBI-740019">
        <id>O15162</id>
    </interactant>
    <interactant intactId="EBI-10310206">
        <id>Q9HBR3</id>
        <label>GDPD5</label>
    </interactant>
    <organismsDiffer>false</organismsDiffer>
    <experiments>3</experiments>
</comment>
<comment type="interaction">
    <interactant intactId="EBI-740019">
        <id>O15162</id>
    </interactant>
    <interactant intactId="EBI-374781">
        <id>O76003</id>
        <label>GLRX3</label>
    </interactant>
    <organismsDiffer>false</organismsDiffer>
    <experiments>4</experiments>
</comment>
<comment type="interaction">
    <interactant intactId="EBI-740019">
        <id>O15162</id>
    </interactant>
    <interactant intactId="EBI-743980">
        <id>Q9NXX0</id>
        <label>ILF3</label>
    </interactant>
    <organismsDiffer>false</organismsDiffer>
    <experiments>4</experiments>
</comment>
<comment type="interaction">
    <interactant intactId="EBI-740019">
        <id>O15162</id>
    </interactant>
    <interactant intactId="EBI-10217483">
        <id>P60412</id>
        <label>KRTAP10-11</label>
    </interactant>
    <organismsDiffer>false</organismsDiffer>
    <experiments>3</experiments>
</comment>
<comment type="interaction">
    <interactant intactId="EBI-740019">
        <id>O15162</id>
    </interactant>
    <interactant intactId="EBI-10172052">
        <id>P60411</id>
        <label>KRTAP10-9</label>
    </interactant>
    <organismsDiffer>false</organismsDiffer>
    <experiments>3</experiments>
</comment>
<comment type="interaction">
    <interactant intactId="EBI-740019">
        <id>O15162</id>
    </interactant>
    <interactant intactId="EBI-10302392">
        <id>Q9BYQ6</id>
        <label>KRTAP4-11</label>
    </interactant>
    <organismsDiffer>false</organismsDiffer>
    <experiments>3</experiments>
</comment>
<comment type="interaction">
    <interactant intactId="EBI-740019">
        <id>O15162</id>
    </interactant>
    <interactant intactId="EBI-10172511">
        <id>Q9BYR5</id>
        <label>KRTAP4-2</label>
    </interactant>
    <organismsDiffer>false</organismsDiffer>
    <experiments>3</experiments>
</comment>
<comment type="interaction">
    <interactant intactId="EBI-740019">
        <id>O15162</id>
    </interactant>
    <interactant intactId="EBI-10250562">
        <id>Q6L8G9</id>
        <label>KRTAP5-6</label>
    </interactant>
    <organismsDiffer>false</organismsDiffer>
    <experiments>3</experiments>
</comment>
<comment type="interaction">
    <interactant intactId="EBI-740019">
        <id>O15162</id>
    </interactant>
    <interactant intactId="EBI-1044640">
        <id>Q9BYQ4</id>
        <label>KRTAP9-2</label>
    </interactant>
    <organismsDiffer>false</organismsDiffer>
    <experiments>3</experiments>
</comment>
<comment type="interaction">
    <interactant intactId="EBI-740019">
        <id>O15162</id>
    </interactant>
    <interactant intactId="EBI-10246750">
        <id>Q5TA82</id>
        <label>LCE2D</label>
    </interactant>
    <organismsDiffer>false</organismsDiffer>
    <experiments>3</experiments>
</comment>
<comment type="interaction">
    <interactant intactId="EBI-740019">
        <id>O15162</id>
    </interactant>
    <interactant intactId="EBI-10246358">
        <id>Q5TA78</id>
        <label>LCE4A</label>
    </interactant>
    <organismsDiffer>false</organismsDiffer>
    <experiments>3</experiments>
</comment>
<comment type="interaction">
    <interactant intactId="EBI-740019">
        <id>O15162</id>
    </interactant>
    <interactant intactId="EBI-9088829">
        <id>Q6DKI2</id>
        <label>LGALS9C</label>
    </interactant>
    <organismsDiffer>false</organismsDiffer>
    <experiments>3</experiments>
</comment>
<comment type="interaction">
    <interactant intactId="EBI-740019">
        <id>O15162</id>
    </interactant>
    <interactant intactId="EBI-746964">
        <id>Q8WWR8</id>
        <label>NEU4</label>
    </interactant>
    <organismsDiffer>false</organismsDiffer>
    <experiments>2</experiments>
</comment>
<comment type="interaction">
    <interactant intactId="EBI-740019">
        <id>O15162</id>
    </interactant>
    <interactant intactId="EBI-1210753">
        <id>Q7Z417</id>
        <label>NUFIP2</label>
    </interactant>
    <organismsDiffer>false</organismsDiffer>
    <experiments>2</experiments>
</comment>
<comment type="interaction">
    <interactant intactId="EBI-740019">
        <id>O15162</id>
    </interactant>
    <interactant intactId="EBI-2903088">
        <id>Q16625</id>
        <label>OCLN</label>
    </interactant>
    <organismsDiffer>false</organismsDiffer>
    <experiments>2</experiments>
</comment>
<comment type="interaction">
    <interactant intactId="EBI-740019">
        <id>O15162</id>
    </interactant>
    <interactant intactId="EBI-10235794">
        <id>Q15077</id>
        <label>P2RY6</label>
    </interactant>
    <organismsDiffer>false</organismsDiffer>
    <experiments>3</experiments>
</comment>
<comment type="interaction">
    <interactant intactId="EBI-740019">
        <id>O15162</id>
    </interactant>
    <interactant intactId="EBI-7813714">
        <id>Q13563</id>
        <label>PKD2</label>
    </interactant>
    <organismsDiffer>false</organismsDiffer>
    <experiments>3</experiments>
</comment>
<comment type="interaction">
    <interactant intactId="EBI-740019">
        <id>O15162</id>
    </interactant>
    <interactant intactId="EBI-740924">
        <id>Q9NZ81</id>
        <label>PRR13</label>
    </interactant>
    <organismsDiffer>false</organismsDiffer>
    <experiments>3</experiments>
</comment>
<comment type="interaction">
    <interactant intactId="EBI-740019">
        <id>O15162</id>
    </interactant>
    <interactant intactId="EBI-2107809">
        <id>P49796</id>
        <label>RGS3</label>
    </interactant>
    <organismsDiffer>false</organismsDiffer>
    <experiments>3</experiments>
</comment>
<comment type="interaction">
    <interactant intactId="EBI-740019">
        <id>O15162</id>
    </interactant>
    <interactant intactId="EBI-748391">
        <id>Q9BWG6</id>
        <label>SCNM1</label>
    </interactant>
    <organismsDiffer>false</organismsDiffer>
    <experiments>4</experiments>
</comment>
<comment type="interaction">
    <interactant intactId="EBI-740019">
        <id>O15162</id>
    </interactant>
    <interactant intactId="EBI-355653">
        <id>Q92922</id>
        <label>SMARCC1</label>
    </interactant>
    <organismsDiffer>false</organismsDiffer>
    <experiments>3</experiments>
</comment>
<comment type="interaction">
    <interactant intactId="EBI-740019">
        <id>O15162</id>
    </interactant>
    <interactant intactId="EBI-8635958">
        <id>Q6RVD6</id>
        <label>SPATA8</label>
    </interactant>
    <organismsDiffer>false</organismsDiffer>
    <experiments>3</experiments>
</comment>
<comment type="interaction">
    <interactant intactId="EBI-740019">
        <id>O15162</id>
    </interactant>
    <interactant intactId="EBI-749295">
        <id>O75716</id>
        <label>STK16</label>
    </interactant>
    <organismsDiffer>false</organismsDiffer>
    <experiments>3</experiments>
</comment>
<comment type="interaction">
    <interactant intactId="EBI-740019">
        <id>O15162</id>
    </interactant>
    <interactant intactId="EBI-357061">
        <id>Q92734</id>
        <label>TFG</label>
    </interactant>
    <organismsDiffer>false</organismsDiffer>
    <experiments>2</experiments>
</comment>
<comment type="interaction">
    <interactant intactId="EBI-740019">
        <id>O15162</id>
    </interactant>
    <interactant intactId="EBI-5235829">
        <id>Q8IWZ5</id>
        <label>TRIM42</label>
    </interactant>
    <organismsDiffer>false</organismsDiffer>
    <experiments>3</experiments>
</comment>
<comment type="interaction">
    <interactant intactId="EBI-740019">
        <id>O15162</id>
    </interactant>
    <interactant intactId="EBI-2559305">
        <id>A5D8V6</id>
        <label>VPS37C</label>
    </interactant>
    <organismsDiffer>false</organismsDiffer>
    <experiments>3</experiments>
</comment>
<comment type="interaction">
    <interactant intactId="EBI-740019">
        <id>O15162</id>
    </interactant>
    <interactant intactId="EBI-740727">
        <id>Q8TAU3</id>
        <label>ZNF417</label>
    </interactant>
    <organismsDiffer>false</organismsDiffer>
    <experiments>3</experiments>
</comment>
<comment type="interaction">
    <interactant intactId="EBI-740019">
        <id>O15162</id>
    </interactant>
    <interactant intactId="EBI-6427977">
        <id>Q96SQ5</id>
        <label>ZNF587</label>
    </interactant>
    <organismsDiffer>false</organismsDiffer>
    <experiments>3</experiments>
</comment>
<comment type="interaction">
    <interactant intactId="EBI-740019">
        <id>O15162</id>
    </interactant>
    <interactant intactId="EBI-16429014">
        <id>A0A0S2Z5X4</id>
        <label>ZNF688</label>
    </interactant>
    <organismsDiffer>false</organismsDiffer>
    <experiments>3</experiments>
</comment>
<comment type="interaction">
    <interactant intactId="EBI-740019">
        <id>O15162</id>
    </interactant>
    <interactant intactId="EBI-3957603">
        <id>P09022</id>
        <label>Hoxa1</label>
    </interactant>
    <organismsDiffer>true</organismsDiffer>
    <experiments>3</experiments>
</comment>
<comment type="interaction">
    <interactant intactId="EBI-740019">
        <id>O15162</id>
    </interactant>
    <interactant intactId="EBI-20592302">
        <id>Q8ZG77</id>
        <label>ompA</label>
    </interactant>
    <organismsDiffer>true</organismsDiffer>
    <experiments>2</experiments>
</comment>
<comment type="interaction">
    <interactant intactId="EBI-740019">
        <id>O15162</id>
    </interactant>
    <interactant intactId="EBI-20592268">
        <id>Q56973</id>
        <label>yscB</label>
    </interactant>
    <organismsDiffer>true</organismsDiffer>
    <experiments>2</experiments>
</comment>
<comment type="interaction">
    <interactant intactId="EBI-740019">
        <id>O15162</id>
    </interactant>
    <interactant intactId="EBI-2842860">
        <id>P69974</id>
        <label>yscK</label>
    </interactant>
    <organismsDiffer>true</organismsDiffer>
    <experiments>2</experiments>
</comment>
<comment type="interaction">
    <interactant intactId="EBI-740019">
        <id>O15162</id>
    </interactant>
    <interactant intactId="EBI-20592244">
        <id>P61417</id>
        <label>yscY</label>
    </interactant>
    <organismsDiffer>true</organismsDiffer>
    <experiments>2</experiments>
</comment>
<comment type="interaction">
    <interactant intactId="EBI-740019">
        <id>O15162</id>
    </interactant>
    <interactant intactId="EBI-710918">
        <id>Q9WMX2</id>
    </interactant>
    <organismsDiffer>true</organismsDiffer>
    <experiments>8</experiments>
</comment>
<comment type="subcellular location">
    <subcellularLocation>
        <location evidence="7 14 17 20 22 30">Cell membrane</location>
        <topology evidence="22">Single-pass type II membrane protein</topology>
    </subcellularLocation>
    <subcellularLocation>
        <location evidence="7">Cell membrane</location>
        <topology evidence="38">Lipid-anchor</topology>
        <orientation>Cytoplasmic side</orientation>
    </subcellularLocation>
    <subcellularLocation>
        <location evidence="7 10 15 16 20 29">Nucleus</location>
    </subcellularLocation>
    <subcellularLocation>
        <location evidence="14 15 16 24 29">Cytoplasm</location>
    </subcellularLocation>
    <subcellularLocation>
        <location evidence="14 22">Cytoplasm</location>
        <location evidence="14 22">Perinuclear region</location>
    </subcellularLocation>
    <text evidence="7 14">Localizes to the perinuclear region in the presence of RELT (PubMed:22052202). Palmitoylation regulates its localization to the cell membrane or the nucleus; trafficking to the cell membrane is dependent upon palmitoylation whereas in the absence of palmitoylation, localizes to the nucleus (PubMed:12564925).</text>
</comment>
<comment type="alternative products">
    <event type="alternative splicing"/>
    <isoform>
        <id>O15162-1</id>
        <name>1</name>
        <sequence type="displayed"/>
    </isoform>
    <isoform>
        <id>O15162-2</id>
        <name>2</name>
        <sequence type="described" ref="VSP_055237 VSP_055238"/>
    </isoform>
</comment>
<comment type="tissue specificity">
    <text evidence="5 32">Expressed in platelets, erythrocyte membranes, lymphocytes, spleen, thymus, prostate, testis, uterus, intestine, colon, heart, placenta, lung, liver, kidney and pancreas. Not detected in brain and skeletal muscle.</text>
</comment>
<comment type="induction">
    <text evidence="8">(Microbial infection) Induced by IFNB1/IFN-beta in response to a viral infection.</text>
</comment>
<comment type="induction">
    <text evidence="22">Up-regulated during PMA-induced differentiation of the monocytic cell line THP-1.</text>
</comment>
<comment type="domain">
    <text evidence="20">The N-terminal proline-rich domain (PRD) is required for phospholipid scramblase activity.</text>
</comment>
<comment type="domain">
    <text evidence="17 19">The transmembrane domain is essential for membrane insertion, phospholipid scramblase activity and proper calcium-binding.</text>
</comment>
<comment type="PTM">
    <text evidence="4 14">Phosphorylation at Thr-161 by PKC/PKCD increases its phospholipid scramblase activity during both cell stimulation and apoptosis (PubMed:10770950). Phosphorylated by OXSR1 in the presence of RELT.</text>
</comment>
<comment type="PTM">
    <text evidence="7 34">Palmitoylation is required for its phospholipid scramblase activity (PubMed:9572851). Palmitoylation regulates its localization to the cell membrane or the nucleus; trafficking to the cell membrane is dependent upon palmitoylation whereas in the absence of palmitoylation, localizes to the nucleus (PubMed:12564925).</text>
</comment>
<comment type="similarity">
    <text evidence="37">Belongs to the phospholipid scramblase family.</text>
</comment>
<comment type="online information" name="Wikipedia">
    <link uri="https://en.wikipedia.org/wiki/Scramblase"/>
    <text>Scramblase entry</text>
</comment>